<protein>
    <recommendedName>
        <fullName>UPF0758 protein RPB_0700</fullName>
    </recommendedName>
</protein>
<sequence>MVDPISNAAPPMPADSSERLDPPGFAEAPHYHGHRERLRERFREAGAAALSDYELLELVLFRALPRRDVKPLAKALIARFGSFAETMQAPEPRLREVSGLGEAAITEIKLVAAAAARVTKGQVKSRTVLSSWSAVIDYCRTTMAFADREQFRILFLDKRNQLIADELQQVGTVDHTPVYPREIVKRALELSATAVIMVHNHPSGDPTPSQADIQMTKTIVAIAEPLGVAVHDHIIVGKNGHASLKGLKLF</sequence>
<feature type="chain" id="PRO_1000089836" description="UPF0758 protein RPB_0700">
    <location>
        <begin position="1"/>
        <end position="250"/>
    </location>
</feature>
<feature type="domain" description="MPN" evidence="1">
    <location>
        <begin position="128"/>
        <end position="250"/>
    </location>
</feature>
<feature type="region of interest" description="Disordered" evidence="2">
    <location>
        <begin position="1"/>
        <end position="27"/>
    </location>
</feature>
<feature type="short sequence motif" description="JAMM motif" evidence="1">
    <location>
        <begin position="199"/>
        <end position="212"/>
    </location>
</feature>
<feature type="binding site" evidence="1">
    <location>
        <position position="199"/>
    </location>
    <ligand>
        <name>Zn(2+)</name>
        <dbReference type="ChEBI" id="CHEBI:29105"/>
        <note>catalytic</note>
    </ligand>
</feature>
<feature type="binding site" evidence="1">
    <location>
        <position position="201"/>
    </location>
    <ligand>
        <name>Zn(2+)</name>
        <dbReference type="ChEBI" id="CHEBI:29105"/>
        <note>catalytic</note>
    </ligand>
</feature>
<feature type="binding site" evidence="1">
    <location>
        <position position="212"/>
    </location>
    <ligand>
        <name>Zn(2+)</name>
        <dbReference type="ChEBI" id="CHEBI:29105"/>
        <note>catalytic</note>
    </ligand>
</feature>
<dbReference type="EMBL" id="CP000250">
    <property type="protein sequence ID" value="ABD05411.1"/>
    <property type="molecule type" value="Genomic_DNA"/>
</dbReference>
<dbReference type="SMR" id="Q2J299"/>
<dbReference type="STRING" id="316058.RPB_0700"/>
<dbReference type="KEGG" id="rpb:RPB_0700"/>
<dbReference type="eggNOG" id="COG2003">
    <property type="taxonomic scope" value="Bacteria"/>
</dbReference>
<dbReference type="HOGENOM" id="CLU_073529_0_0_5"/>
<dbReference type="Proteomes" id="UP000008809">
    <property type="component" value="Chromosome"/>
</dbReference>
<dbReference type="GO" id="GO:0046872">
    <property type="term" value="F:metal ion binding"/>
    <property type="evidence" value="ECO:0007669"/>
    <property type="project" value="UniProtKB-KW"/>
</dbReference>
<dbReference type="GO" id="GO:0008237">
    <property type="term" value="F:metallopeptidase activity"/>
    <property type="evidence" value="ECO:0007669"/>
    <property type="project" value="UniProtKB-KW"/>
</dbReference>
<dbReference type="GO" id="GO:0006508">
    <property type="term" value="P:proteolysis"/>
    <property type="evidence" value="ECO:0007669"/>
    <property type="project" value="UniProtKB-KW"/>
</dbReference>
<dbReference type="CDD" id="cd08071">
    <property type="entry name" value="MPN_DUF2466"/>
    <property type="match status" value="1"/>
</dbReference>
<dbReference type="Gene3D" id="3.40.140.10">
    <property type="entry name" value="Cytidine Deaminase, domain 2"/>
    <property type="match status" value="1"/>
</dbReference>
<dbReference type="InterPro" id="IPR037518">
    <property type="entry name" value="MPN"/>
</dbReference>
<dbReference type="InterPro" id="IPR025657">
    <property type="entry name" value="RadC_JAB"/>
</dbReference>
<dbReference type="InterPro" id="IPR010994">
    <property type="entry name" value="RuvA_2-like"/>
</dbReference>
<dbReference type="InterPro" id="IPR001405">
    <property type="entry name" value="UPF0758"/>
</dbReference>
<dbReference type="InterPro" id="IPR020891">
    <property type="entry name" value="UPF0758_CS"/>
</dbReference>
<dbReference type="InterPro" id="IPR046778">
    <property type="entry name" value="UPF0758_N"/>
</dbReference>
<dbReference type="NCBIfam" id="NF000642">
    <property type="entry name" value="PRK00024.1"/>
    <property type="match status" value="1"/>
</dbReference>
<dbReference type="NCBIfam" id="TIGR00608">
    <property type="entry name" value="radc"/>
    <property type="match status" value="1"/>
</dbReference>
<dbReference type="PANTHER" id="PTHR30471">
    <property type="entry name" value="DNA REPAIR PROTEIN RADC"/>
    <property type="match status" value="1"/>
</dbReference>
<dbReference type="PANTHER" id="PTHR30471:SF3">
    <property type="entry name" value="UPF0758 PROTEIN YEES-RELATED"/>
    <property type="match status" value="1"/>
</dbReference>
<dbReference type="Pfam" id="PF04002">
    <property type="entry name" value="RadC"/>
    <property type="match status" value="1"/>
</dbReference>
<dbReference type="Pfam" id="PF20582">
    <property type="entry name" value="UPF0758_N"/>
    <property type="match status" value="1"/>
</dbReference>
<dbReference type="SUPFAM" id="SSF102712">
    <property type="entry name" value="JAB1/MPN domain"/>
    <property type="match status" value="1"/>
</dbReference>
<dbReference type="SUPFAM" id="SSF47781">
    <property type="entry name" value="RuvA domain 2-like"/>
    <property type="match status" value="1"/>
</dbReference>
<dbReference type="PROSITE" id="PS50249">
    <property type="entry name" value="MPN"/>
    <property type="match status" value="1"/>
</dbReference>
<dbReference type="PROSITE" id="PS01302">
    <property type="entry name" value="UPF0758"/>
    <property type="match status" value="1"/>
</dbReference>
<comment type="similarity">
    <text evidence="3">Belongs to the UPF0758 family.</text>
</comment>
<reference key="1">
    <citation type="submission" date="2006-01" db="EMBL/GenBank/DDBJ databases">
        <title>Complete sequence of Rhodopseudomonas palustris HaA2.</title>
        <authorList>
            <consortium name="US DOE Joint Genome Institute"/>
            <person name="Copeland A."/>
            <person name="Lucas S."/>
            <person name="Lapidus A."/>
            <person name="Barry K."/>
            <person name="Detter J.C."/>
            <person name="Glavina T."/>
            <person name="Hammon N."/>
            <person name="Israni S."/>
            <person name="Pitluck S."/>
            <person name="Chain P."/>
            <person name="Malfatti S."/>
            <person name="Shin M."/>
            <person name="Vergez L."/>
            <person name="Schmutz J."/>
            <person name="Larimer F."/>
            <person name="Land M."/>
            <person name="Hauser L."/>
            <person name="Pelletier D.A."/>
            <person name="Kyrpides N."/>
            <person name="Anderson I."/>
            <person name="Oda Y."/>
            <person name="Harwood C.S."/>
            <person name="Richardson P."/>
        </authorList>
    </citation>
    <scope>NUCLEOTIDE SEQUENCE [LARGE SCALE GENOMIC DNA]</scope>
    <source>
        <strain>HaA2</strain>
    </source>
</reference>
<accession>Q2J299</accession>
<gene>
    <name type="ordered locus">RPB_0700</name>
</gene>
<name>Y700_RHOP2</name>
<keyword id="KW-0378">Hydrolase</keyword>
<keyword id="KW-0479">Metal-binding</keyword>
<keyword id="KW-0482">Metalloprotease</keyword>
<keyword id="KW-0645">Protease</keyword>
<keyword id="KW-1185">Reference proteome</keyword>
<keyword id="KW-0862">Zinc</keyword>
<organism>
    <name type="scientific">Rhodopseudomonas palustris (strain HaA2)</name>
    <dbReference type="NCBI Taxonomy" id="316058"/>
    <lineage>
        <taxon>Bacteria</taxon>
        <taxon>Pseudomonadati</taxon>
        <taxon>Pseudomonadota</taxon>
        <taxon>Alphaproteobacteria</taxon>
        <taxon>Hyphomicrobiales</taxon>
        <taxon>Nitrobacteraceae</taxon>
        <taxon>Rhodopseudomonas</taxon>
    </lineage>
</organism>
<proteinExistence type="inferred from homology"/>
<evidence type="ECO:0000255" key="1">
    <source>
        <dbReference type="PROSITE-ProRule" id="PRU01182"/>
    </source>
</evidence>
<evidence type="ECO:0000256" key="2">
    <source>
        <dbReference type="SAM" id="MobiDB-lite"/>
    </source>
</evidence>
<evidence type="ECO:0000305" key="3"/>